<dbReference type="EMBL" id="CP001280">
    <property type="protein sequence ID" value="ACK51830.1"/>
    <property type="molecule type" value="Genomic_DNA"/>
</dbReference>
<dbReference type="RefSeq" id="WP_012591899.1">
    <property type="nucleotide sequence ID" value="NC_011666.1"/>
</dbReference>
<dbReference type="SMR" id="B8EIL3"/>
<dbReference type="STRING" id="395965.Msil_2914"/>
<dbReference type="KEGG" id="msl:Msil_2914"/>
<dbReference type="eggNOG" id="COG1219">
    <property type="taxonomic scope" value="Bacteria"/>
</dbReference>
<dbReference type="HOGENOM" id="CLU_014218_8_2_5"/>
<dbReference type="OrthoDB" id="9804062at2"/>
<dbReference type="Proteomes" id="UP000002257">
    <property type="component" value="Chromosome"/>
</dbReference>
<dbReference type="GO" id="GO:0009376">
    <property type="term" value="C:HslUV protease complex"/>
    <property type="evidence" value="ECO:0007669"/>
    <property type="project" value="TreeGrafter"/>
</dbReference>
<dbReference type="GO" id="GO:0005524">
    <property type="term" value="F:ATP binding"/>
    <property type="evidence" value="ECO:0007669"/>
    <property type="project" value="UniProtKB-UniRule"/>
</dbReference>
<dbReference type="GO" id="GO:0016887">
    <property type="term" value="F:ATP hydrolysis activity"/>
    <property type="evidence" value="ECO:0007669"/>
    <property type="project" value="InterPro"/>
</dbReference>
<dbReference type="GO" id="GO:0140662">
    <property type="term" value="F:ATP-dependent protein folding chaperone"/>
    <property type="evidence" value="ECO:0007669"/>
    <property type="project" value="InterPro"/>
</dbReference>
<dbReference type="GO" id="GO:0046983">
    <property type="term" value="F:protein dimerization activity"/>
    <property type="evidence" value="ECO:0007669"/>
    <property type="project" value="InterPro"/>
</dbReference>
<dbReference type="GO" id="GO:0051082">
    <property type="term" value="F:unfolded protein binding"/>
    <property type="evidence" value="ECO:0007669"/>
    <property type="project" value="UniProtKB-UniRule"/>
</dbReference>
<dbReference type="GO" id="GO:0008270">
    <property type="term" value="F:zinc ion binding"/>
    <property type="evidence" value="ECO:0007669"/>
    <property type="project" value="InterPro"/>
</dbReference>
<dbReference type="GO" id="GO:0051301">
    <property type="term" value="P:cell division"/>
    <property type="evidence" value="ECO:0007669"/>
    <property type="project" value="TreeGrafter"/>
</dbReference>
<dbReference type="GO" id="GO:0051603">
    <property type="term" value="P:proteolysis involved in protein catabolic process"/>
    <property type="evidence" value="ECO:0007669"/>
    <property type="project" value="TreeGrafter"/>
</dbReference>
<dbReference type="CDD" id="cd19497">
    <property type="entry name" value="RecA-like_ClpX"/>
    <property type="match status" value="1"/>
</dbReference>
<dbReference type="FunFam" id="1.10.8.60:FF:000002">
    <property type="entry name" value="ATP-dependent Clp protease ATP-binding subunit ClpX"/>
    <property type="match status" value="1"/>
</dbReference>
<dbReference type="FunFam" id="3.40.50.300:FF:000005">
    <property type="entry name" value="ATP-dependent Clp protease ATP-binding subunit ClpX"/>
    <property type="match status" value="1"/>
</dbReference>
<dbReference type="Gene3D" id="1.10.8.60">
    <property type="match status" value="1"/>
</dbReference>
<dbReference type="Gene3D" id="6.20.220.10">
    <property type="entry name" value="ClpX chaperone, C4-type zinc finger domain"/>
    <property type="match status" value="1"/>
</dbReference>
<dbReference type="Gene3D" id="3.40.50.300">
    <property type="entry name" value="P-loop containing nucleotide triphosphate hydrolases"/>
    <property type="match status" value="1"/>
</dbReference>
<dbReference type="HAMAP" id="MF_00175">
    <property type="entry name" value="ClpX"/>
    <property type="match status" value="1"/>
</dbReference>
<dbReference type="InterPro" id="IPR003593">
    <property type="entry name" value="AAA+_ATPase"/>
</dbReference>
<dbReference type="InterPro" id="IPR050052">
    <property type="entry name" value="ATP-dep_Clp_protease_ClpX"/>
</dbReference>
<dbReference type="InterPro" id="IPR003959">
    <property type="entry name" value="ATPase_AAA_core"/>
</dbReference>
<dbReference type="InterPro" id="IPR019489">
    <property type="entry name" value="Clp_ATPase_C"/>
</dbReference>
<dbReference type="InterPro" id="IPR004487">
    <property type="entry name" value="Clp_protease_ATP-bd_su_ClpX"/>
</dbReference>
<dbReference type="InterPro" id="IPR046425">
    <property type="entry name" value="ClpX_bact"/>
</dbReference>
<dbReference type="InterPro" id="IPR027417">
    <property type="entry name" value="P-loop_NTPase"/>
</dbReference>
<dbReference type="InterPro" id="IPR010603">
    <property type="entry name" value="Znf_CppX_C4"/>
</dbReference>
<dbReference type="InterPro" id="IPR038366">
    <property type="entry name" value="Znf_CppX_C4_sf"/>
</dbReference>
<dbReference type="NCBIfam" id="TIGR00382">
    <property type="entry name" value="clpX"/>
    <property type="match status" value="1"/>
</dbReference>
<dbReference type="NCBIfam" id="NF003745">
    <property type="entry name" value="PRK05342.1"/>
    <property type="match status" value="1"/>
</dbReference>
<dbReference type="PANTHER" id="PTHR48102:SF7">
    <property type="entry name" value="ATP-DEPENDENT CLP PROTEASE ATP-BINDING SUBUNIT CLPX-LIKE, MITOCHONDRIAL"/>
    <property type="match status" value="1"/>
</dbReference>
<dbReference type="PANTHER" id="PTHR48102">
    <property type="entry name" value="ATP-DEPENDENT CLP PROTEASE ATP-BINDING SUBUNIT CLPX-LIKE, MITOCHONDRIAL-RELATED"/>
    <property type="match status" value="1"/>
</dbReference>
<dbReference type="Pfam" id="PF07724">
    <property type="entry name" value="AAA_2"/>
    <property type="match status" value="1"/>
</dbReference>
<dbReference type="Pfam" id="PF10431">
    <property type="entry name" value="ClpB_D2-small"/>
    <property type="match status" value="1"/>
</dbReference>
<dbReference type="Pfam" id="PF06689">
    <property type="entry name" value="zf-C4_ClpX"/>
    <property type="match status" value="1"/>
</dbReference>
<dbReference type="SMART" id="SM00382">
    <property type="entry name" value="AAA"/>
    <property type="match status" value="1"/>
</dbReference>
<dbReference type="SMART" id="SM01086">
    <property type="entry name" value="ClpB_D2-small"/>
    <property type="match status" value="1"/>
</dbReference>
<dbReference type="SMART" id="SM00994">
    <property type="entry name" value="zf-C4_ClpX"/>
    <property type="match status" value="1"/>
</dbReference>
<dbReference type="SUPFAM" id="SSF57716">
    <property type="entry name" value="Glucocorticoid receptor-like (DNA-binding domain)"/>
    <property type="match status" value="1"/>
</dbReference>
<dbReference type="SUPFAM" id="SSF52540">
    <property type="entry name" value="P-loop containing nucleoside triphosphate hydrolases"/>
    <property type="match status" value="1"/>
</dbReference>
<dbReference type="PROSITE" id="PS51902">
    <property type="entry name" value="CLPX_ZB"/>
    <property type="match status" value="1"/>
</dbReference>
<comment type="function">
    <text evidence="1">ATP-dependent specificity component of the Clp protease. It directs the protease to specific substrates. Can perform chaperone functions in the absence of ClpP.</text>
</comment>
<comment type="subunit">
    <text evidence="1">Component of the ClpX-ClpP complex. Forms a hexameric ring that, in the presence of ATP, binds to fourteen ClpP subunits assembled into a disk-like structure with a central cavity, resembling the structure of eukaryotic proteasomes.</text>
</comment>
<comment type="similarity">
    <text evidence="1">Belongs to the ClpX chaperone family.</text>
</comment>
<name>CLPX_METSB</name>
<gene>
    <name evidence="1" type="primary">clpX</name>
    <name type="ordered locus">Msil_2914</name>
</gene>
<feature type="chain" id="PRO_1000123842" description="ATP-dependent Clp protease ATP-binding subunit ClpX">
    <location>
        <begin position="1"/>
        <end position="421"/>
    </location>
</feature>
<feature type="domain" description="ClpX-type ZB" evidence="2">
    <location>
        <begin position="3"/>
        <end position="56"/>
    </location>
</feature>
<feature type="binding site" evidence="2">
    <location>
        <position position="15"/>
    </location>
    <ligand>
        <name>Zn(2+)</name>
        <dbReference type="ChEBI" id="CHEBI:29105"/>
    </ligand>
</feature>
<feature type="binding site" evidence="2">
    <location>
        <position position="18"/>
    </location>
    <ligand>
        <name>Zn(2+)</name>
        <dbReference type="ChEBI" id="CHEBI:29105"/>
    </ligand>
</feature>
<feature type="binding site" evidence="2">
    <location>
        <position position="37"/>
    </location>
    <ligand>
        <name>Zn(2+)</name>
        <dbReference type="ChEBI" id="CHEBI:29105"/>
    </ligand>
</feature>
<feature type="binding site" evidence="2">
    <location>
        <position position="40"/>
    </location>
    <ligand>
        <name>Zn(2+)</name>
        <dbReference type="ChEBI" id="CHEBI:29105"/>
    </ligand>
</feature>
<feature type="binding site" evidence="1">
    <location>
        <begin position="119"/>
        <end position="126"/>
    </location>
    <ligand>
        <name>ATP</name>
        <dbReference type="ChEBI" id="CHEBI:30616"/>
    </ligand>
</feature>
<reference key="1">
    <citation type="journal article" date="2010" name="J. Bacteriol.">
        <title>Complete genome sequence of the aerobic facultative methanotroph Methylocella silvestris BL2.</title>
        <authorList>
            <person name="Chen Y."/>
            <person name="Crombie A."/>
            <person name="Rahman M.T."/>
            <person name="Dedysh S.N."/>
            <person name="Liesack W."/>
            <person name="Stott M.B."/>
            <person name="Alam M."/>
            <person name="Theisen A.R."/>
            <person name="Murrell J.C."/>
            <person name="Dunfield P.F."/>
        </authorList>
    </citation>
    <scope>NUCLEOTIDE SEQUENCE [LARGE SCALE GENOMIC DNA]</scope>
    <source>
        <strain>DSM 15510 / CIP 108128 / LMG 27833 / NCIMB 13906 / BL2</strain>
    </source>
</reference>
<evidence type="ECO:0000255" key="1">
    <source>
        <dbReference type="HAMAP-Rule" id="MF_00175"/>
    </source>
</evidence>
<evidence type="ECO:0000255" key="2">
    <source>
        <dbReference type="PROSITE-ProRule" id="PRU01250"/>
    </source>
</evidence>
<organism>
    <name type="scientific">Methylocella silvestris (strain DSM 15510 / CIP 108128 / LMG 27833 / NCIMB 13906 / BL2)</name>
    <dbReference type="NCBI Taxonomy" id="395965"/>
    <lineage>
        <taxon>Bacteria</taxon>
        <taxon>Pseudomonadati</taxon>
        <taxon>Pseudomonadota</taxon>
        <taxon>Alphaproteobacteria</taxon>
        <taxon>Hyphomicrobiales</taxon>
        <taxon>Beijerinckiaceae</taxon>
        <taxon>Methylocella</taxon>
    </lineage>
</organism>
<proteinExistence type="inferred from homology"/>
<sequence>MTKVGGGDAKNTLYCSFCGKSQHEVRKLIAGPTVFICDECVELCMDIIREENKSSLVKSRDGIPTPKEICKVLDDYVIGQPQAKRVLSVAVHNHYKRLNHATKHNDVELAKSNILLIGPTGSGKTLLAQTLARILDVPFTMADATTLTEAGYVGEDVENIILKLLQASDYNVERAQRGIVYIDEIDKISRKSDNPSITRDVSGEGVQQALLKIMEGTVASVPPQGGRKHPQQEFLQVDTTNILFICGGAFAGLEKIISTRGKGTSIGFGATVQAPDDRRTGEIFRKVEPEDLLKFGLIPEFVGRLPVIATLEDLDEEALKKILTEPKNALVKQYQRLFEMENTELSFQDEALNVVAKKAIERRTGARGLRSIMEGILLDTMFDLPGLDSVEQVVIGPDVVEGKSRPLYIYAERNEKSGTSA</sequence>
<protein>
    <recommendedName>
        <fullName evidence="1">ATP-dependent Clp protease ATP-binding subunit ClpX</fullName>
    </recommendedName>
</protein>
<keyword id="KW-0067">ATP-binding</keyword>
<keyword id="KW-0143">Chaperone</keyword>
<keyword id="KW-0479">Metal-binding</keyword>
<keyword id="KW-0547">Nucleotide-binding</keyword>
<keyword id="KW-1185">Reference proteome</keyword>
<keyword id="KW-0862">Zinc</keyword>
<accession>B8EIL3</accession>